<accession>F4HVG8</accession>
<accession>F4HVG9</accession>
<accession>Q94AA5</accession>
<accession>Q9FXE6</accession>
<sequence length="611" mass="66843">MLLSAIASQTLLSSNPNLHFSNSIPNPRPSNPSLKLLNASSSSSSSSSSSIFTRGLRYVNHTVSNEESEPGGGETMVASASAIASAIRGASTTPVEFTQMIEKDHLKTKIILPSPDFQRLCLEQLDLFRQIVDPNAVLSIYVRPAGSYVMDRLELRRVTCYPSVNAGDVVILVGNFGIPAGLRAAEASLSSQQVELVSKHRAAVFPMVKHPFVVGFLVAELPVEAEEEEEEEEEEKPHGVNQFLSPEEAYALPASANTKSPRVKLPSVKVFTEEQRSYAINISRTLAMAYVMDQKTMLLQQSSWQNNVRMSKLVEQIRGPLSTMRTLSKMLSTHTKRNQISHDIVEDLIVQGDQIKDTLEELQDAVHLTKANIVRHNEEALKKINKTHNETRRSKYEHKDPIDGSQISSTRLSLGSGLDDSEMPMPPLALAPLQMHSIRPCDISNVLLDMVETVRPLALTQQRVVELGENSASLQVAVEEPALRQALSNLIEGALLRTHVGGKVEILSTRAPAGGSLVVIDDDGPDMRYMTQMHSLTPFGAELLSENMVEDNMTWNFVAGLTVAREILESYGCVIRVISPRSSDAALGAGGTRVELWLPAFPAAVSEANEA</sequence>
<name>CSK_ARATH</name>
<dbReference type="EC" id="2.7.10.2" evidence="10"/>
<dbReference type="EMBL" id="AC008113">
    <property type="protein sequence ID" value="AAG28912.1"/>
    <property type="status" value="ALT_SEQ"/>
    <property type="molecule type" value="Genomic_DNA"/>
</dbReference>
<dbReference type="EMBL" id="CP002684">
    <property type="protein sequence ID" value="AEE34704.1"/>
    <property type="molecule type" value="Genomic_DNA"/>
</dbReference>
<dbReference type="EMBL" id="CP002684">
    <property type="protein sequence ID" value="AEE34705.1"/>
    <property type="molecule type" value="Genomic_DNA"/>
</dbReference>
<dbReference type="EMBL" id="AY049244">
    <property type="protein sequence ID" value="AAK83586.1"/>
    <property type="status" value="ALT_SEQ"/>
    <property type="molecule type" value="mRNA"/>
</dbReference>
<dbReference type="EMBL" id="AY113030">
    <property type="protein sequence ID" value="AAM47338.1"/>
    <property type="status" value="ALT_SEQ"/>
    <property type="molecule type" value="mRNA"/>
</dbReference>
<dbReference type="EMBL" id="BX814127">
    <property type="status" value="NOT_ANNOTATED_CDS"/>
    <property type="molecule type" value="mRNA"/>
</dbReference>
<dbReference type="PIR" id="A96701">
    <property type="entry name" value="A96701"/>
</dbReference>
<dbReference type="RefSeq" id="NP_564908.1">
    <molecule id="F4HVG8-1"/>
    <property type="nucleotide sequence ID" value="NM_105452.2"/>
</dbReference>
<dbReference type="RefSeq" id="NP_974101.1">
    <molecule id="F4HVG8-2"/>
    <property type="nucleotide sequence ID" value="NM_202372.2"/>
</dbReference>
<dbReference type="FunCoup" id="F4HVG8">
    <property type="interactions" value="1098"/>
</dbReference>
<dbReference type="STRING" id="3702.F4HVG8"/>
<dbReference type="iPTMnet" id="F4HVG8"/>
<dbReference type="PaxDb" id="3702-AT1G67840.1"/>
<dbReference type="ProteomicsDB" id="220365">
    <molecule id="F4HVG8-1"/>
</dbReference>
<dbReference type="EnsemblPlants" id="AT1G67840.1">
    <molecule id="F4HVG8-1"/>
    <property type="protein sequence ID" value="AT1G67840.1"/>
    <property type="gene ID" value="AT1G67840"/>
</dbReference>
<dbReference type="EnsemblPlants" id="AT1G67840.2">
    <molecule id="F4HVG8-2"/>
    <property type="protein sequence ID" value="AT1G67840.2"/>
    <property type="gene ID" value="AT1G67840"/>
</dbReference>
<dbReference type="GeneID" id="843110"/>
<dbReference type="Gramene" id="AT1G67840.1">
    <molecule id="F4HVG8-1"/>
    <property type="protein sequence ID" value="AT1G67840.1"/>
    <property type="gene ID" value="AT1G67840"/>
</dbReference>
<dbReference type="Gramene" id="AT1G67840.2">
    <molecule id="F4HVG8-2"/>
    <property type="protein sequence ID" value="AT1G67840.2"/>
    <property type="gene ID" value="AT1G67840"/>
</dbReference>
<dbReference type="KEGG" id="ath:AT1G67840"/>
<dbReference type="Araport" id="AT1G67840"/>
<dbReference type="TAIR" id="AT1G67840">
    <property type="gene designation" value="CSK"/>
</dbReference>
<dbReference type="eggNOG" id="ENOG502QPUM">
    <property type="taxonomic scope" value="Eukaryota"/>
</dbReference>
<dbReference type="HOGENOM" id="CLU_030225_0_0_1"/>
<dbReference type="InParanoid" id="F4HVG8"/>
<dbReference type="OMA" id="HTKRNEI"/>
<dbReference type="PRO" id="PR:F4HVG8"/>
<dbReference type="Proteomes" id="UP000006548">
    <property type="component" value="Chromosome 1"/>
</dbReference>
<dbReference type="ExpressionAtlas" id="F4HVG8">
    <property type="expression patterns" value="baseline and differential"/>
</dbReference>
<dbReference type="GO" id="GO:0009507">
    <property type="term" value="C:chloroplast"/>
    <property type="evidence" value="ECO:0000314"/>
    <property type="project" value="TAIR"/>
</dbReference>
<dbReference type="GO" id="GO:0009570">
    <property type="term" value="C:chloroplast stroma"/>
    <property type="evidence" value="ECO:0000314"/>
    <property type="project" value="TAIR"/>
</dbReference>
<dbReference type="GO" id="GO:0051538">
    <property type="term" value="F:3 iron, 4 sulfur cluster binding"/>
    <property type="evidence" value="ECO:0007669"/>
    <property type="project" value="UniProtKB-KW"/>
</dbReference>
<dbReference type="GO" id="GO:0016301">
    <property type="term" value="F:kinase activity"/>
    <property type="evidence" value="ECO:0000314"/>
    <property type="project" value="TAIR"/>
</dbReference>
<dbReference type="GO" id="GO:0046872">
    <property type="term" value="F:metal ion binding"/>
    <property type="evidence" value="ECO:0007669"/>
    <property type="project" value="UniProtKB-KW"/>
</dbReference>
<dbReference type="GO" id="GO:0004715">
    <property type="term" value="F:non-membrane spanning protein tyrosine kinase activity"/>
    <property type="evidence" value="ECO:0007669"/>
    <property type="project" value="UniProtKB-EC"/>
</dbReference>
<dbReference type="GO" id="GO:0004673">
    <property type="term" value="F:protein histidine kinase activity"/>
    <property type="evidence" value="ECO:0000314"/>
    <property type="project" value="UniProtKB"/>
</dbReference>
<dbReference type="GO" id="GO:0048038">
    <property type="term" value="F:quinone binding"/>
    <property type="evidence" value="ECO:0000314"/>
    <property type="project" value="UniProtKB"/>
</dbReference>
<dbReference type="GO" id="GO:0051776">
    <property type="term" value="P:detection of redox state"/>
    <property type="evidence" value="ECO:0000315"/>
    <property type="project" value="UniProtKB"/>
</dbReference>
<dbReference type="GO" id="GO:0080005">
    <property type="term" value="P:photosystem stoichiometry adjustment"/>
    <property type="evidence" value="ECO:0000315"/>
    <property type="project" value="UniProtKB"/>
</dbReference>
<dbReference type="GO" id="GO:0046777">
    <property type="term" value="P:protein autophosphorylation"/>
    <property type="evidence" value="ECO:0000314"/>
    <property type="project" value="TAIR"/>
</dbReference>
<dbReference type="GO" id="GO:0010468">
    <property type="term" value="P:regulation of gene expression"/>
    <property type="evidence" value="ECO:0000315"/>
    <property type="project" value="TAIR"/>
</dbReference>
<dbReference type="GO" id="GO:0010109">
    <property type="term" value="P:regulation of photosynthesis"/>
    <property type="evidence" value="ECO:0000315"/>
    <property type="project" value="UniProtKB"/>
</dbReference>
<dbReference type="Gene3D" id="3.30.565.10">
    <property type="entry name" value="Histidine kinase-like ATPase, C-terminal domain"/>
    <property type="match status" value="1"/>
</dbReference>
<dbReference type="InterPro" id="IPR053334">
    <property type="entry name" value="Chloroplast_Sensor_Kinase"/>
</dbReference>
<dbReference type="InterPro" id="IPR036890">
    <property type="entry name" value="HATPase_C_sf"/>
</dbReference>
<dbReference type="PANTHER" id="PTHR48206">
    <property type="entry name" value="CHLOROPLAST SENSOR KINASE, CHLOROPLASTIC"/>
    <property type="match status" value="1"/>
</dbReference>
<dbReference type="PANTHER" id="PTHR48206:SF1">
    <property type="entry name" value="CHLOROPLAST SENSOR KINASE, CHLOROPLASTIC"/>
    <property type="match status" value="1"/>
</dbReference>
<dbReference type="Pfam" id="PF02518">
    <property type="entry name" value="HATPase_c"/>
    <property type="match status" value="1"/>
</dbReference>
<dbReference type="SUPFAM" id="SSF55874">
    <property type="entry name" value="ATPase domain of HSP90 chaperone/DNA topoisomerase II/histidine kinase"/>
    <property type="match status" value="1"/>
</dbReference>
<proteinExistence type="evidence at protein level"/>
<feature type="transit peptide" description="Chloroplast" evidence="1">
    <location>
        <begin position="1"/>
        <end position="79"/>
    </location>
</feature>
<feature type="chain" id="PRO_0000432898" description="Chloroplast sensor kinase, chloroplastic" evidence="1">
    <location>
        <begin position="80"/>
        <end position="611"/>
    </location>
</feature>
<feature type="domain" description="Histidine kinase" evidence="2">
    <location>
        <begin position="312"/>
        <end position="602"/>
    </location>
</feature>
<feature type="region of interest" description="Disordered" evidence="3">
    <location>
        <begin position="17"/>
        <end position="50"/>
    </location>
</feature>
<feature type="region of interest" description="GAF" evidence="11">
    <location>
        <begin position="116"/>
        <end position="300"/>
    </location>
</feature>
<feature type="region of interest" description="Disordered" evidence="3">
    <location>
        <begin position="385"/>
        <end position="420"/>
    </location>
</feature>
<feature type="coiled-coil region" evidence="1">
    <location>
        <begin position="345"/>
        <end position="380"/>
    </location>
</feature>
<feature type="compositionally biased region" description="Low complexity" evidence="3">
    <location>
        <begin position="40"/>
        <end position="50"/>
    </location>
</feature>
<feature type="compositionally biased region" description="Basic and acidic residues" evidence="3">
    <location>
        <begin position="385"/>
        <end position="402"/>
    </location>
</feature>
<feature type="binding site" evidence="11">
    <location>
        <position position="121"/>
    </location>
    <ligand>
        <name>[3Fe-4S] cluster</name>
        <dbReference type="ChEBI" id="CHEBI:21137"/>
    </ligand>
</feature>
<feature type="modified residue" description="Phosphoserine" evidence="7">
    <location>
        <position position="188"/>
    </location>
</feature>
<feature type="splice variant" id="VSP_057631" description="In isoform 2.">
    <original>PCDISN</original>
    <variation>KTMRHF</variation>
    <location>
        <begin position="440"/>
        <end position="445"/>
    </location>
</feature>
<feature type="splice variant" id="VSP_057632" description="In isoform 2.">
    <location>
        <begin position="446"/>
        <end position="611"/>
    </location>
</feature>
<feature type="sequence conflict" description="In Ref. 4; BX814127." evidence="9" ref="4">
    <original>S</original>
    <variation>T</variation>
    <location>
        <position position="33"/>
    </location>
</feature>
<feature type="sequence conflict" description="In Ref. 4; BX814127." evidence="9" ref="4">
    <original>DL</original>
    <variation>EI</variation>
    <location>
        <begin position="347"/>
        <end position="348"/>
    </location>
</feature>
<feature type="sequence conflict" description="In Ref. 3; AAK83586/AAM47338." evidence="9" ref="3">
    <original>V</original>
    <variation>M</variation>
    <location>
        <position position="374"/>
    </location>
</feature>
<reference key="1">
    <citation type="journal article" date="2000" name="Nature">
        <title>Sequence and analysis of chromosome 1 of the plant Arabidopsis thaliana.</title>
        <authorList>
            <person name="Theologis A."/>
            <person name="Ecker J.R."/>
            <person name="Palm C.J."/>
            <person name="Federspiel N.A."/>
            <person name="Kaul S."/>
            <person name="White O."/>
            <person name="Alonso J."/>
            <person name="Altafi H."/>
            <person name="Araujo R."/>
            <person name="Bowman C.L."/>
            <person name="Brooks S.Y."/>
            <person name="Buehler E."/>
            <person name="Chan A."/>
            <person name="Chao Q."/>
            <person name="Chen H."/>
            <person name="Cheuk R.F."/>
            <person name="Chin C.W."/>
            <person name="Chung M.K."/>
            <person name="Conn L."/>
            <person name="Conway A.B."/>
            <person name="Conway A.R."/>
            <person name="Creasy T.H."/>
            <person name="Dewar K."/>
            <person name="Dunn P."/>
            <person name="Etgu P."/>
            <person name="Feldblyum T.V."/>
            <person name="Feng J.-D."/>
            <person name="Fong B."/>
            <person name="Fujii C.Y."/>
            <person name="Gill J.E."/>
            <person name="Goldsmith A.D."/>
            <person name="Haas B."/>
            <person name="Hansen N.F."/>
            <person name="Hughes B."/>
            <person name="Huizar L."/>
            <person name="Hunter J.L."/>
            <person name="Jenkins J."/>
            <person name="Johnson-Hopson C."/>
            <person name="Khan S."/>
            <person name="Khaykin E."/>
            <person name="Kim C.J."/>
            <person name="Koo H.L."/>
            <person name="Kremenetskaia I."/>
            <person name="Kurtz D.B."/>
            <person name="Kwan A."/>
            <person name="Lam B."/>
            <person name="Langin-Hooper S."/>
            <person name="Lee A."/>
            <person name="Lee J.M."/>
            <person name="Lenz C.A."/>
            <person name="Li J.H."/>
            <person name="Li Y.-P."/>
            <person name="Lin X."/>
            <person name="Liu S.X."/>
            <person name="Liu Z.A."/>
            <person name="Luros J.S."/>
            <person name="Maiti R."/>
            <person name="Marziali A."/>
            <person name="Militscher J."/>
            <person name="Miranda M."/>
            <person name="Nguyen M."/>
            <person name="Nierman W.C."/>
            <person name="Osborne B.I."/>
            <person name="Pai G."/>
            <person name="Peterson J."/>
            <person name="Pham P.K."/>
            <person name="Rizzo M."/>
            <person name="Rooney T."/>
            <person name="Rowley D."/>
            <person name="Sakano H."/>
            <person name="Salzberg S.L."/>
            <person name="Schwartz J.R."/>
            <person name="Shinn P."/>
            <person name="Southwick A.M."/>
            <person name="Sun H."/>
            <person name="Tallon L.J."/>
            <person name="Tambunga G."/>
            <person name="Toriumi M.J."/>
            <person name="Town C.D."/>
            <person name="Utterback T."/>
            <person name="Van Aken S."/>
            <person name="Vaysberg M."/>
            <person name="Vysotskaia V.S."/>
            <person name="Walker M."/>
            <person name="Wu D."/>
            <person name="Yu G."/>
            <person name="Fraser C.M."/>
            <person name="Venter J.C."/>
            <person name="Davis R.W."/>
        </authorList>
    </citation>
    <scope>NUCLEOTIDE SEQUENCE [LARGE SCALE GENOMIC DNA]</scope>
    <source>
        <strain>cv. Columbia</strain>
    </source>
</reference>
<reference key="2">
    <citation type="journal article" date="2017" name="Plant J.">
        <title>Araport11: a complete reannotation of the Arabidopsis thaliana reference genome.</title>
        <authorList>
            <person name="Cheng C.Y."/>
            <person name="Krishnakumar V."/>
            <person name="Chan A.P."/>
            <person name="Thibaud-Nissen F."/>
            <person name="Schobel S."/>
            <person name="Town C.D."/>
        </authorList>
    </citation>
    <scope>GENOME REANNOTATION</scope>
    <source>
        <strain>cv. Columbia</strain>
    </source>
</reference>
<reference key="3">
    <citation type="journal article" date="2003" name="Science">
        <title>Empirical analysis of transcriptional activity in the Arabidopsis genome.</title>
        <authorList>
            <person name="Yamada K."/>
            <person name="Lim J."/>
            <person name="Dale J.M."/>
            <person name="Chen H."/>
            <person name="Shinn P."/>
            <person name="Palm C.J."/>
            <person name="Southwick A.M."/>
            <person name="Wu H.C."/>
            <person name="Kim C.J."/>
            <person name="Nguyen M."/>
            <person name="Pham P.K."/>
            <person name="Cheuk R.F."/>
            <person name="Karlin-Newmann G."/>
            <person name="Liu S.X."/>
            <person name="Lam B."/>
            <person name="Sakano H."/>
            <person name="Wu T."/>
            <person name="Yu G."/>
            <person name="Miranda M."/>
            <person name="Quach H.L."/>
            <person name="Tripp M."/>
            <person name="Chang C.H."/>
            <person name="Lee J.M."/>
            <person name="Toriumi M.J."/>
            <person name="Chan M.M."/>
            <person name="Tang C.C."/>
            <person name="Onodera C.S."/>
            <person name="Deng J.M."/>
            <person name="Akiyama K."/>
            <person name="Ansari Y."/>
            <person name="Arakawa T."/>
            <person name="Banh J."/>
            <person name="Banno F."/>
            <person name="Bowser L."/>
            <person name="Brooks S.Y."/>
            <person name="Carninci P."/>
            <person name="Chao Q."/>
            <person name="Choy N."/>
            <person name="Enju A."/>
            <person name="Goldsmith A.D."/>
            <person name="Gurjal M."/>
            <person name="Hansen N.F."/>
            <person name="Hayashizaki Y."/>
            <person name="Johnson-Hopson C."/>
            <person name="Hsuan V.W."/>
            <person name="Iida K."/>
            <person name="Karnes M."/>
            <person name="Khan S."/>
            <person name="Koesema E."/>
            <person name="Ishida J."/>
            <person name="Jiang P.X."/>
            <person name="Jones T."/>
            <person name="Kawai J."/>
            <person name="Kamiya A."/>
            <person name="Meyers C."/>
            <person name="Nakajima M."/>
            <person name="Narusaka M."/>
            <person name="Seki M."/>
            <person name="Sakurai T."/>
            <person name="Satou M."/>
            <person name="Tamse R."/>
            <person name="Vaysberg M."/>
            <person name="Wallender E.K."/>
            <person name="Wong C."/>
            <person name="Yamamura Y."/>
            <person name="Yuan S."/>
            <person name="Shinozaki K."/>
            <person name="Davis R.W."/>
            <person name="Theologis A."/>
            <person name="Ecker J.R."/>
        </authorList>
    </citation>
    <scope>NUCLEOTIDE SEQUENCE [LARGE SCALE MRNA] (ISOFORM 1)</scope>
    <source>
        <strain>cv. Columbia</strain>
    </source>
</reference>
<reference key="4">
    <citation type="journal article" date="2004" name="Genome Res.">
        <title>Whole genome sequence comparisons and 'full-length' cDNA sequences: a combined approach to evaluate and improve Arabidopsis genome annotation.</title>
        <authorList>
            <person name="Castelli V."/>
            <person name="Aury J.-M."/>
            <person name="Jaillon O."/>
            <person name="Wincker P."/>
            <person name="Clepet C."/>
            <person name="Menard M."/>
            <person name="Cruaud C."/>
            <person name="Quetier F."/>
            <person name="Scarpelli C."/>
            <person name="Schaechter V."/>
            <person name="Temple G."/>
            <person name="Caboche M."/>
            <person name="Weissenbach J."/>
            <person name="Salanoubat M."/>
        </authorList>
    </citation>
    <scope>NUCLEOTIDE SEQUENCE [LARGE SCALE MRNA] (ISOFORM 2)</scope>
    <source>
        <strain>cv. Columbia</strain>
    </source>
</reference>
<reference key="5">
    <citation type="journal article" date="2008" name="Proc. Natl. Acad. Sci. U.S.A.">
        <title>The ancestral symbiont sensor kinase CSK links photosynthesis with gene expression in chloroplasts.</title>
        <authorList>
            <person name="Puthiyaveetil S."/>
            <person name="Kavanagh T.A."/>
            <person name="Cain P."/>
            <person name="Sullivan J.A."/>
            <person name="Newell C.A."/>
            <person name="Gray J.C."/>
            <person name="Robinson C."/>
            <person name="van der Giezen M."/>
            <person name="Rogers M.B."/>
            <person name="Allen J.F."/>
        </authorList>
    </citation>
    <scope>FUNCTION</scope>
    <scope>DISRUPTION PHENOTYPE</scope>
    <scope>CATALYTIC ACTIVITY</scope>
    <scope>SUBCELLULAR LOCATION</scope>
    <scope>AUTOPHOSPHORYLATION</scope>
    <source>
        <strain>cv. Columbia</strain>
    </source>
</reference>
<reference key="6">
    <citation type="journal article" date="2011" name="PLoS ONE">
        <title>Discrete redox signaling pathways regulate photosynthetic light-harvesting and chloroplast gene transcription.</title>
        <authorList>
            <person name="Allen J.F."/>
            <person name="Santabarbara S."/>
            <person name="Allen C.A."/>
            <person name="Puthiyaveetil S."/>
        </authorList>
    </citation>
    <scope>FUNCTION</scope>
    <scope>DISRUPTION PHENOTYPE</scope>
    <source>
        <strain>cv. Columbia</strain>
    </source>
</reference>
<reference key="7">
    <citation type="journal article" date="2012" name="Plant Cell Environ.">
        <title>Oxidation-reduction signalling components in regulatory pathways of state transitions and photosystem stoichiometry adjustment in chloroplasts.</title>
        <authorList>
            <person name="Puthiyaveetil S."/>
            <person name="Ibrahim I.M."/>
            <person name="Allen J.F."/>
        </authorList>
    </citation>
    <scope>REVIEW</scope>
</reference>
<reference key="8">
    <citation type="journal article" date="2013" name="Philos. Trans. R. Soc. Lond., B, Biol. Sci.">
        <title>Evolutionary rewiring: a modified prokaryotic gene-regulatory pathway in chloroplasts.</title>
        <authorList>
            <person name="Puthiyaveetil S."/>
            <person name="Ibrahim I.M."/>
            <person name="Allen J.F."/>
        </authorList>
    </citation>
    <scope>FUNCTION</scope>
    <scope>INTERACTION WITH QUINONE ANALOG AND SIGA/SIG1</scope>
    <scope>SUBUNIT</scope>
</reference>
<reference key="9">
    <citation type="journal article" date="2020" name="Commun. Biol.">
        <title>An evolutionarily conserved iron-sulfur cluster underlies redox sensory function of the Chloroplast Sensor Kinase.</title>
        <authorList>
            <person name="Ibrahim I.M."/>
            <person name="Wu H."/>
            <person name="Ezhov R."/>
            <person name="Kayanja G.E."/>
            <person name="Zakharov S.D."/>
            <person name="Du Y."/>
            <person name="Tao W.A."/>
            <person name="Pushkar Y."/>
            <person name="Cramer W.A."/>
            <person name="Puthiyaveetil S."/>
        </authorList>
    </citation>
    <scope>FUNCTION</scope>
    <scope>COFACTOR</scope>
    <scope>SUBCELLULAR LOCATION</scope>
    <scope>PHOSPHORYLATION AT SER-188</scope>
    <scope>DISRUPTION PHENOTYPE</scope>
    <source>
        <strain>Col-0</strain>
    </source>
</reference>
<protein>
    <recommendedName>
        <fullName evidence="8">Chloroplast sensor kinase, chloroplastic</fullName>
        <ecNumber evidence="10">2.7.10.2</ecNumber>
    </recommendedName>
</protein>
<comment type="function">
    <text evidence="4 5 6 7">Sensor kinase that senses the plastoquinone (PQ) redox state involved in stoichiometry adjustment of both photosystems (e.g. long-term adaptation via transcriptional regulation of reaction center genes of photosystems I and II) and state transitions (e.g. short-term adaptation involving reversible post-translational phosphorylation of light-harvesting complex II, LHC II), thus linking photosynthesis with gene expression in chloroplasts (PubMed:18632566, PubMed:22039472). Autophosphorylates, probably on a tyrosine residue (PubMed:18632566). Probably phosphorylates SIGA/SIG1 in response to plastoquinone redox state modification (PubMed:23754813). Reduced PQ suppresses its autophosphorylation activity. Represses expression of a number of chloroplast-encoded genes (PubMed:31925322).</text>
</comment>
<comment type="catalytic activity">
    <reaction evidence="10">
        <text>L-tyrosyl-[protein] + ATP = O-phospho-L-tyrosyl-[protein] + ADP + H(+)</text>
        <dbReference type="Rhea" id="RHEA:10596"/>
        <dbReference type="Rhea" id="RHEA-COMP:10136"/>
        <dbReference type="Rhea" id="RHEA-COMP:20101"/>
        <dbReference type="ChEBI" id="CHEBI:15378"/>
        <dbReference type="ChEBI" id="CHEBI:30616"/>
        <dbReference type="ChEBI" id="CHEBI:46858"/>
        <dbReference type="ChEBI" id="CHEBI:61978"/>
        <dbReference type="ChEBI" id="CHEBI:456216"/>
        <dbReference type="EC" id="2.7.10.2"/>
    </reaction>
</comment>
<comment type="cofactor">
    <cofactor evidence="7">
        <name>[3Fe-4S] cluster</name>
        <dbReference type="ChEBI" id="CHEBI:21137"/>
    </cofactor>
    <text evidence="7">The 3Fe-4S cluster is redox-responsive, binds 1 cluster per monomer.</text>
</comment>
<comment type="subunit">
    <text evidence="6">Self-interacts. Interacts with the plastoquinone analog 2,5-dibromo-3-methyl-5-isopropyl-p-benzoquinone (DBMIB) and with SIGA/SIG1.</text>
</comment>
<comment type="subcellular location">
    <subcellularLocation>
        <location evidence="4">Plastid</location>
        <location evidence="4">Chloroplast stroma</location>
    </subcellularLocation>
    <text evidence="11">Associates with thylakoid membranes.</text>
</comment>
<comment type="alternative products">
    <event type="alternative splicing"/>
    <isoform>
        <id>F4HVG8-1</id>
        <name>1</name>
        <sequence type="displayed"/>
    </isoform>
    <isoform>
        <id>F4HVG8-2</id>
        <name>2</name>
        <sequence type="described" ref="VSP_057631 VSP_057632"/>
    </isoform>
</comment>
<comment type="PTM">
    <text evidence="4 7">Autophosphorylated, possibly on tyrosine residues, in photosystem I (PS I) light and in the presence of manganese ions Mn(2+), to a lesser degree, in the presence of calcium ions Ca(2+), but not in the presence of magnesium ions Mg(2+). Dithiothreitol (DTT) stimulates autophosphorylation (PubMed:18632566). Phosphorylated on Ser-188 in vivo after exposure to far-red light (when plastoquinone (PQ) is oxidized). Not phosphorylated under orange light (reduces PQ) (PubMed:31925322).</text>
</comment>
<comment type="disruption phenotype">
    <text evidence="4 5 7">Abnormal regulation of psaA gene expression by light variation and reduced plastoquinone (PQ) pool (PubMed:18632566, PubMed:22039472). Accentuated superimposition effect of light leading to PQ oxidation. Increased level of non-photochemical quenching, faster pre-steady state kinetics of the 'Kautsky' transient (PubMed:22039472). Up-regulation of chloroplast-encoded photosystem and non-photosystem genes (PubMed:31925322).</text>
</comment>
<comment type="similarity">
    <text evidence="9">Belongs to the chloroplast sensor kinase protein family.</text>
</comment>
<comment type="sequence caution" evidence="9">
    <conflict type="erroneous gene model prediction">
        <sequence resource="EMBL-CDS" id="AAG28912"/>
    </conflict>
</comment>
<comment type="sequence caution" evidence="9">
    <conflict type="erroneous initiation">
        <sequence resource="EMBL-CDS" id="AAK83586"/>
    </conflict>
    <text>Truncated N-terminus.</text>
</comment>
<comment type="sequence caution" evidence="9">
    <conflict type="frameshift">
        <sequence resource="EMBL-CDS" id="AAK83586"/>
    </conflict>
</comment>
<comment type="sequence caution" evidence="9">
    <conflict type="frameshift">
        <sequence resource="EMBL-CDS" id="AAM47338"/>
    </conflict>
</comment>
<keyword id="KW-0003">3Fe-4S</keyword>
<keyword id="KW-0025">Alternative splicing</keyword>
<keyword id="KW-0150">Chloroplast</keyword>
<keyword id="KW-0175">Coiled coil</keyword>
<keyword id="KW-0408">Iron</keyword>
<keyword id="KW-0411">Iron-sulfur</keyword>
<keyword id="KW-0418">Kinase</keyword>
<keyword id="KW-0479">Metal-binding</keyword>
<keyword id="KW-0597">Phosphoprotein</keyword>
<keyword id="KW-0934">Plastid</keyword>
<keyword id="KW-1185">Reference proteome</keyword>
<keyword id="KW-0808">Transferase</keyword>
<keyword id="KW-0809">Transit peptide</keyword>
<organism evidence="14">
    <name type="scientific">Arabidopsis thaliana</name>
    <name type="common">Mouse-ear cress</name>
    <dbReference type="NCBI Taxonomy" id="3702"/>
    <lineage>
        <taxon>Eukaryota</taxon>
        <taxon>Viridiplantae</taxon>
        <taxon>Streptophyta</taxon>
        <taxon>Embryophyta</taxon>
        <taxon>Tracheophyta</taxon>
        <taxon>Spermatophyta</taxon>
        <taxon>Magnoliopsida</taxon>
        <taxon>eudicotyledons</taxon>
        <taxon>Gunneridae</taxon>
        <taxon>Pentapetalae</taxon>
        <taxon>rosids</taxon>
        <taxon>malvids</taxon>
        <taxon>Brassicales</taxon>
        <taxon>Brassicaceae</taxon>
        <taxon>Camelineae</taxon>
        <taxon>Arabidopsis</taxon>
    </lineage>
</organism>
<evidence type="ECO:0000255" key="1"/>
<evidence type="ECO:0000255" key="2">
    <source>
        <dbReference type="PROSITE-ProRule" id="PRU00107"/>
    </source>
</evidence>
<evidence type="ECO:0000256" key="3">
    <source>
        <dbReference type="SAM" id="MobiDB-lite"/>
    </source>
</evidence>
<evidence type="ECO:0000269" key="4">
    <source>
    </source>
</evidence>
<evidence type="ECO:0000269" key="5">
    <source>
    </source>
</evidence>
<evidence type="ECO:0000269" key="6">
    <source>
    </source>
</evidence>
<evidence type="ECO:0000269" key="7">
    <source>
    </source>
</evidence>
<evidence type="ECO:0000303" key="8">
    <source>
    </source>
</evidence>
<evidence type="ECO:0000305" key="9"/>
<evidence type="ECO:0000305" key="10">
    <source>
    </source>
</evidence>
<evidence type="ECO:0000305" key="11">
    <source>
    </source>
</evidence>
<evidence type="ECO:0000312" key="12">
    <source>
        <dbReference type="Araport" id="AT1G67840"/>
    </source>
</evidence>
<evidence type="ECO:0000312" key="13">
    <source>
        <dbReference type="EMBL" id="AAG28912.1"/>
    </source>
</evidence>
<evidence type="ECO:0000312" key="14">
    <source>
        <dbReference type="Proteomes" id="UP000006548"/>
    </source>
</evidence>
<gene>
    <name evidence="8" type="primary">CSK</name>
    <name evidence="12" type="ordered locus">At1g67840</name>
    <name evidence="13" type="ORF">F12A21.3</name>
</gene>